<name>CMOB_HAEIG</name>
<feature type="chain" id="PRO_0000313924" description="tRNA U34 carboxymethyltransferase">
    <location>
        <begin position="1"/>
        <end position="321"/>
    </location>
</feature>
<feature type="binding site" evidence="1">
    <location>
        <position position="90"/>
    </location>
    <ligand>
        <name>carboxy-S-adenosyl-L-methionine</name>
        <dbReference type="ChEBI" id="CHEBI:134278"/>
    </ligand>
</feature>
<feature type="binding site" evidence="1">
    <location>
        <position position="104"/>
    </location>
    <ligand>
        <name>carboxy-S-adenosyl-L-methionine</name>
        <dbReference type="ChEBI" id="CHEBI:134278"/>
    </ligand>
</feature>
<feature type="binding site" evidence="1">
    <location>
        <position position="109"/>
    </location>
    <ligand>
        <name>carboxy-S-adenosyl-L-methionine</name>
        <dbReference type="ChEBI" id="CHEBI:134278"/>
    </ligand>
</feature>
<feature type="binding site" evidence="1">
    <location>
        <position position="129"/>
    </location>
    <ligand>
        <name>carboxy-S-adenosyl-L-methionine</name>
        <dbReference type="ChEBI" id="CHEBI:134278"/>
    </ligand>
</feature>
<feature type="binding site" evidence="1">
    <location>
        <begin position="151"/>
        <end position="153"/>
    </location>
    <ligand>
        <name>carboxy-S-adenosyl-L-methionine</name>
        <dbReference type="ChEBI" id="CHEBI:134278"/>
    </ligand>
</feature>
<feature type="binding site" evidence="1">
    <location>
        <begin position="180"/>
        <end position="181"/>
    </location>
    <ligand>
        <name>carboxy-S-adenosyl-L-methionine</name>
        <dbReference type="ChEBI" id="CHEBI:134278"/>
    </ligand>
</feature>
<feature type="binding site" evidence="1">
    <location>
        <position position="195"/>
    </location>
    <ligand>
        <name>carboxy-S-adenosyl-L-methionine</name>
        <dbReference type="ChEBI" id="CHEBI:134278"/>
    </ligand>
</feature>
<feature type="binding site" evidence="1">
    <location>
        <position position="199"/>
    </location>
    <ligand>
        <name>carboxy-S-adenosyl-L-methionine</name>
        <dbReference type="ChEBI" id="CHEBI:134278"/>
    </ligand>
</feature>
<feature type="binding site" evidence="1">
    <location>
        <position position="314"/>
    </location>
    <ligand>
        <name>carboxy-S-adenosyl-L-methionine</name>
        <dbReference type="ChEBI" id="CHEBI:134278"/>
    </ligand>
</feature>
<reference key="1">
    <citation type="journal article" date="2007" name="Genome Biol.">
        <title>Characterization and modeling of the Haemophilus influenzae core and supragenomes based on the complete genomic sequences of Rd and 12 clinical nontypeable strains.</title>
        <authorList>
            <person name="Hogg J.S."/>
            <person name="Hu F.Z."/>
            <person name="Janto B."/>
            <person name="Boissy R."/>
            <person name="Hayes J."/>
            <person name="Keefe R."/>
            <person name="Post J.C."/>
            <person name="Ehrlich G.D."/>
        </authorList>
    </citation>
    <scope>NUCLEOTIDE SEQUENCE [LARGE SCALE GENOMIC DNA]</scope>
    <source>
        <strain>PittGG</strain>
    </source>
</reference>
<accession>A5UEI8</accession>
<protein>
    <recommendedName>
        <fullName evidence="1">tRNA U34 carboxymethyltransferase</fullName>
        <ecNumber evidence="1">2.5.1.-</ecNumber>
    </recommendedName>
</protein>
<sequence>MIDFRPFYQQIATTNLSDWLETLPLQLKEWETQTHGDYAKWSKIVDFLPDLHADEIDLKSAVKSDRTSPLSEGEKQRIIHHLKQLMPWRKGPYHLFGIHVDCEWRSDFKWDRVLPHLAPLQGRTILDVGCGSGYHMWRMVGEGAKMVVGIDPTELFLCQFEAVRKLLNNDRRANLIPLGIEQMQPLAAFDTVFSMGVLYHRKSPLDHLSQLKNQLVKGGELVLETLVVDGDVNTVLVPIDRYAKMKNVYFIPSVAALINWLEKVGFTNVRCVDVATTTLEEQRKTDWLENESLIDFLDPNDHSKTIEGYHAPKRAVILANK</sequence>
<proteinExistence type="inferred from homology"/>
<gene>
    <name evidence="1" type="primary">cmoB</name>
    <name type="ordered locus">CGSHiGG_00400</name>
</gene>
<organism>
    <name type="scientific">Haemophilus influenzae (strain PittGG)</name>
    <dbReference type="NCBI Taxonomy" id="374931"/>
    <lineage>
        <taxon>Bacteria</taxon>
        <taxon>Pseudomonadati</taxon>
        <taxon>Pseudomonadota</taxon>
        <taxon>Gammaproteobacteria</taxon>
        <taxon>Pasteurellales</taxon>
        <taxon>Pasteurellaceae</taxon>
        <taxon>Haemophilus</taxon>
    </lineage>
</organism>
<comment type="function">
    <text evidence="1">Catalyzes carboxymethyl transfer from carboxy-S-adenosyl-L-methionine (Cx-SAM) to 5-hydroxyuridine (ho5U) to form 5-carboxymethoxyuridine (cmo5U) at position 34 in tRNAs.</text>
</comment>
<comment type="catalytic activity">
    <reaction evidence="1">
        <text>carboxy-S-adenosyl-L-methionine + 5-hydroxyuridine(34) in tRNA = 5-carboxymethoxyuridine(34) in tRNA + S-adenosyl-L-homocysteine + H(+)</text>
        <dbReference type="Rhea" id="RHEA:52848"/>
        <dbReference type="Rhea" id="RHEA-COMP:13381"/>
        <dbReference type="Rhea" id="RHEA-COMP:13383"/>
        <dbReference type="ChEBI" id="CHEBI:15378"/>
        <dbReference type="ChEBI" id="CHEBI:57856"/>
        <dbReference type="ChEBI" id="CHEBI:134278"/>
        <dbReference type="ChEBI" id="CHEBI:136877"/>
        <dbReference type="ChEBI" id="CHEBI:136879"/>
    </reaction>
</comment>
<comment type="subunit">
    <text evidence="1">Homotetramer.</text>
</comment>
<comment type="similarity">
    <text evidence="1">Belongs to the class I-like SAM-binding methyltransferase superfamily. CmoB family.</text>
</comment>
<keyword id="KW-0808">Transferase</keyword>
<keyword id="KW-0819">tRNA processing</keyword>
<evidence type="ECO:0000255" key="1">
    <source>
        <dbReference type="HAMAP-Rule" id="MF_01590"/>
    </source>
</evidence>
<dbReference type="EC" id="2.5.1.-" evidence="1"/>
<dbReference type="EMBL" id="CP000672">
    <property type="protein sequence ID" value="ABQ99193.1"/>
    <property type="molecule type" value="Genomic_DNA"/>
</dbReference>
<dbReference type="SMR" id="A5UEI8"/>
<dbReference type="KEGG" id="hiq:CGSHiGG_00400"/>
<dbReference type="HOGENOM" id="CLU_052665_0_0_6"/>
<dbReference type="Proteomes" id="UP000001990">
    <property type="component" value="Chromosome"/>
</dbReference>
<dbReference type="GO" id="GO:0008168">
    <property type="term" value="F:methyltransferase activity"/>
    <property type="evidence" value="ECO:0007669"/>
    <property type="project" value="TreeGrafter"/>
</dbReference>
<dbReference type="GO" id="GO:0016765">
    <property type="term" value="F:transferase activity, transferring alkyl or aryl (other than methyl) groups"/>
    <property type="evidence" value="ECO:0007669"/>
    <property type="project" value="UniProtKB-UniRule"/>
</dbReference>
<dbReference type="GO" id="GO:0002098">
    <property type="term" value="P:tRNA wobble uridine modification"/>
    <property type="evidence" value="ECO:0007669"/>
    <property type="project" value="InterPro"/>
</dbReference>
<dbReference type="CDD" id="cd02440">
    <property type="entry name" value="AdoMet_MTases"/>
    <property type="match status" value="1"/>
</dbReference>
<dbReference type="Gene3D" id="3.40.50.150">
    <property type="entry name" value="Vaccinia Virus protein VP39"/>
    <property type="match status" value="1"/>
</dbReference>
<dbReference type="HAMAP" id="MF_01590">
    <property type="entry name" value="tRNA_carboxymethyltr_CmoB"/>
    <property type="match status" value="1"/>
</dbReference>
<dbReference type="InterPro" id="IPR010017">
    <property type="entry name" value="CmoB"/>
</dbReference>
<dbReference type="InterPro" id="IPR027555">
    <property type="entry name" value="Mo5U34_MeTrfas-like"/>
</dbReference>
<dbReference type="InterPro" id="IPR029063">
    <property type="entry name" value="SAM-dependent_MTases_sf"/>
</dbReference>
<dbReference type="NCBIfam" id="NF011650">
    <property type="entry name" value="PRK15068.1"/>
    <property type="match status" value="1"/>
</dbReference>
<dbReference type="NCBIfam" id="TIGR00452">
    <property type="entry name" value="tRNA 5-methoxyuridine(34)/uridine 5-oxyacetic acid(34) synthase CmoB"/>
    <property type="match status" value="1"/>
</dbReference>
<dbReference type="PANTHER" id="PTHR43464">
    <property type="entry name" value="METHYLTRANSFERASE"/>
    <property type="match status" value="1"/>
</dbReference>
<dbReference type="PANTHER" id="PTHR43464:SF95">
    <property type="entry name" value="TRNA U34 CARBOXYMETHYLTRANSFERASE"/>
    <property type="match status" value="1"/>
</dbReference>
<dbReference type="Pfam" id="PF08003">
    <property type="entry name" value="Methyltransf_9"/>
    <property type="match status" value="1"/>
</dbReference>
<dbReference type="SUPFAM" id="SSF53335">
    <property type="entry name" value="S-adenosyl-L-methionine-dependent methyltransferases"/>
    <property type="match status" value="1"/>
</dbReference>